<feature type="chain" id="PRO_0000369512" description="Non-structural protein 6">
    <location>
        <begin position="1"/>
        <end position="92"/>
    </location>
</feature>
<name>NSP6_ROTSH</name>
<sequence>MNRLQQRQLFLENLLVGVNSTFHQMQKHSINTCCRSLQRILDHLILLQTIHSPVFRLDRMQLRQMQTLACLWIHQHNHDLQVMSDAIKWISP</sequence>
<reference key="1">
    <citation type="journal article" date="2007" name="Virology">
        <title>Genome heterogeneity of SA11 rotavirus due to reassortment with 'O' agent.</title>
        <authorList>
            <person name="Small C."/>
            <person name="Barro M."/>
            <person name="Brown T.L."/>
            <person name="Patton J.T."/>
        </authorList>
    </citation>
    <scope>NUCLEOTIDE SEQUENCE [GENOMIC RNA]</scope>
</reference>
<comment type="subunit">
    <text evidence="1">Interacts with NSP2 and NSP5.</text>
</comment>
<comment type="subcellular location">
    <subcellularLocation>
        <location evidence="1">Host cytoplasm</location>
    </subcellularLocation>
    <subcellularLocation>
        <location evidence="1">Host mitochondrion</location>
    </subcellularLocation>
    <text evidence="1">Found in spherical cytoplasmic structures, called viral factories, that appear early after infection and are the site of viral replication and packaging.</text>
</comment>
<comment type="similarity">
    <text evidence="1">Belongs to the rotavirus A NSP6 family.</text>
</comment>
<organismHost>
    <name type="scientific">Chlorocebus pygerythrus</name>
    <name type="common">Vervet monkey</name>
    <name type="synonym">Cercopithecus pygerythrus</name>
    <dbReference type="NCBI Taxonomy" id="60710"/>
</organismHost>
<evidence type="ECO:0000255" key="1">
    <source>
        <dbReference type="HAMAP-Rule" id="MF_04093"/>
    </source>
</evidence>
<keyword id="KW-1035">Host cytoplasm</keyword>
<keyword id="KW-1045">Host mitochondrion</keyword>
<keyword id="KW-1185">Reference proteome</keyword>
<organism>
    <name type="scientific">Rotavirus A (isolate RVA/Monkey/South Africa/SA11-H96/1958/G3P5B[2])</name>
    <name type="common">RV-A</name>
    <name type="synonym">Simian Agent 11 (isolate SI/South Africa/H96/58)</name>
    <dbReference type="NCBI Taxonomy" id="450149"/>
    <lineage>
        <taxon>Viruses</taxon>
        <taxon>Riboviria</taxon>
        <taxon>Orthornavirae</taxon>
        <taxon>Duplornaviricota</taxon>
        <taxon>Resentoviricetes</taxon>
        <taxon>Reovirales</taxon>
        <taxon>Sedoreoviridae</taxon>
        <taxon>Rotavirus</taxon>
        <taxon>Rotavirus A</taxon>
    </lineage>
</organism>
<dbReference type="EMBL" id="DQ838630">
    <property type="protein sequence ID" value="ABG75809.1"/>
    <property type="molecule type" value="Genomic_RNA"/>
</dbReference>
<dbReference type="RefSeq" id="YP_002302225.1">
    <property type="nucleotide sequence ID" value="NC_011505.2"/>
</dbReference>
<dbReference type="GeneID" id="7011363"/>
<dbReference type="KEGG" id="vg:7011363"/>
<dbReference type="Proteomes" id="UP000001119">
    <property type="component" value="Genome"/>
</dbReference>
<dbReference type="GO" id="GO:0033650">
    <property type="term" value="C:host cell mitochondrion"/>
    <property type="evidence" value="ECO:0007669"/>
    <property type="project" value="UniProtKB-SubCell"/>
</dbReference>
<dbReference type="HAMAP" id="MF_04093">
    <property type="entry name" value="ROTA_NSP6"/>
    <property type="match status" value="1"/>
</dbReference>
<dbReference type="InterPro" id="IPR006950">
    <property type="entry name" value="Rotavirus_NSP6"/>
</dbReference>
<dbReference type="Pfam" id="PF04866">
    <property type="entry name" value="Rota_NS6"/>
    <property type="match status" value="1"/>
</dbReference>
<accession>A2T3R0</accession>
<proteinExistence type="inferred from homology"/>
<protein>
    <recommendedName>
        <fullName evidence="1">Non-structural protein 6</fullName>
        <shortName evidence="1">NSP6</shortName>
    </recommendedName>
</protein>